<organism>
    <name type="scientific">Saccharomyces cerevisiae (strain ATCC 204508 / S288c)</name>
    <name type="common">Baker's yeast</name>
    <dbReference type="NCBI Taxonomy" id="559292"/>
    <lineage>
        <taxon>Eukaryota</taxon>
        <taxon>Fungi</taxon>
        <taxon>Dikarya</taxon>
        <taxon>Ascomycota</taxon>
        <taxon>Saccharomycotina</taxon>
        <taxon>Saccharomycetes</taxon>
        <taxon>Saccharomycetales</taxon>
        <taxon>Saccharomycetaceae</taxon>
        <taxon>Saccharomyces</taxon>
    </lineage>
</organism>
<dbReference type="EMBL" id="L15423">
    <property type="protein sequence ID" value="AAA35053.1"/>
    <property type="molecule type" value="Genomic_DNA"/>
</dbReference>
<dbReference type="EMBL" id="L13164">
    <property type="protein sequence ID" value="AAA67469.1"/>
    <property type="molecule type" value="Genomic_DNA"/>
</dbReference>
<dbReference type="EMBL" id="X87941">
    <property type="protein sequence ID" value="CAA61178.1"/>
    <property type="molecule type" value="Genomic_DNA"/>
</dbReference>
<dbReference type="EMBL" id="Z73013">
    <property type="protein sequence ID" value="CAA97257.1"/>
    <property type="molecule type" value="Genomic_DNA"/>
</dbReference>
<dbReference type="EMBL" id="AY723820">
    <property type="protein sequence ID" value="AAU09737.1"/>
    <property type="molecule type" value="Genomic_DNA"/>
</dbReference>
<dbReference type="EMBL" id="BK006941">
    <property type="protein sequence ID" value="DAA08320.1"/>
    <property type="molecule type" value="Genomic_DNA"/>
</dbReference>
<dbReference type="PIR" id="A55923">
    <property type="entry name" value="A55923"/>
</dbReference>
<dbReference type="RefSeq" id="NP_011745.1">
    <property type="nucleotide sequence ID" value="NM_001181358.1"/>
</dbReference>
<dbReference type="PDB" id="5J1B">
    <property type="method" value="X-ray"/>
    <property type="resolution" value="2.50 A"/>
    <property type="chains" value="A/B=80-340"/>
</dbReference>
<dbReference type="PDB" id="6QBM">
    <property type="method" value="X-ray"/>
    <property type="resolution" value="2.50 A"/>
    <property type="chains" value="A/B=80-340"/>
</dbReference>
<dbReference type="PDB" id="6QBN">
    <property type="method" value="X-ray"/>
    <property type="resolution" value="2.40 A"/>
    <property type="chains" value="A/B=80-340"/>
</dbReference>
<dbReference type="PDB" id="6QBO">
    <property type="method" value="X-ray"/>
    <property type="resolution" value="2.75 A"/>
    <property type="chains" value="A/B=80-340"/>
</dbReference>
<dbReference type="PDB" id="6QBP">
    <property type="method" value="X-ray"/>
    <property type="resolution" value="2.40 A"/>
    <property type="chains" value="A/B=80-340"/>
</dbReference>
<dbReference type="PDB" id="6QBQ">
    <property type="method" value="X-ray"/>
    <property type="resolution" value="2.35 A"/>
    <property type="chains" value="A/B=80-340"/>
</dbReference>
<dbReference type="PDB" id="6QBR">
    <property type="method" value="X-ray"/>
    <property type="resolution" value="2.15 A"/>
    <property type="chains" value="A/B=80-340"/>
</dbReference>
<dbReference type="PDB" id="8AJ2">
    <property type="method" value="X-ray"/>
    <property type="resolution" value="2.20 A"/>
    <property type="chains" value="A/B=80-340"/>
</dbReference>
<dbReference type="PDBsum" id="5J1B"/>
<dbReference type="PDBsum" id="6QBM"/>
<dbReference type="PDBsum" id="6QBN"/>
<dbReference type="PDBsum" id="6QBO"/>
<dbReference type="PDBsum" id="6QBP"/>
<dbReference type="PDBsum" id="6QBQ"/>
<dbReference type="PDBsum" id="6QBR"/>
<dbReference type="PDBsum" id="8AJ2"/>
<dbReference type="SASBDB" id="P32566"/>
<dbReference type="SMR" id="P32566"/>
<dbReference type="BioGRID" id="33481">
    <property type="interactions" value="570"/>
</dbReference>
<dbReference type="DIP" id="DIP-1635N"/>
<dbReference type="FunCoup" id="P32566">
    <property type="interactions" value="106"/>
</dbReference>
<dbReference type="IntAct" id="P32566">
    <property type="interactions" value="59"/>
</dbReference>
<dbReference type="MINT" id="P32566"/>
<dbReference type="STRING" id="4932.YGR229C"/>
<dbReference type="iPTMnet" id="P32566"/>
<dbReference type="PaxDb" id="4932-YGR229C"/>
<dbReference type="PeptideAtlas" id="P32566"/>
<dbReference type="EnsemblFungi" id="YGR229C_mRNA">
    <property type="protein sequence ID" value="YGR229C"/>
    <property type="gene ID" value="YGR229C"/>
</dbReference>
<dbReference type="GeneID" id="853144"/>
<dbReference type="KEGG" id="sce:YGR229C"/>
<dbReference type="AGR" id="SGD:S000003461"/>
<dbReference type="SGD" id="S000003461">
    <property type="gene designation" value="SMI1"/>
</dbReference>
<dbReference type="VEuPathDB" id="FungiDB:YGR229C"/>
<dbReference type="eggNOG" id="ENOG502QTAZ">
    <property type="taxonomic scope" value="Eukaryota"/>
</dbReference>
<dbReference type="GeneTree" id="ENSGT00940000153571"/>
<dbReference type="HOGENOM" id="CLU_027501_3_0_1"/>
<dbReference type="InParanoid" id="P32566"/>
<dbReference type="OMA" id="TQNDITH"/>
<dbReference type="OrthoDB" id="2305498at2759"/>
<dbReference type="BioCyc" id="YEAST:G3O-30907-MONOMER"/>
<dbReference type="BioGRID-ORCS" id="853144">
    <property type="hits" value="2 hits in 10 CRISPR screens"/>
</dbReference>
<dbReference type="PRO" id="PR:P32566"/>
<dbReference type="Proteomes" id="UP000002311">
    <property type="component" value="Chromosome VII"/>
</dbReference>
<dbReference type="RNAct" id="P32566">
    <property type="molecule type" value="protein"/>
</dbReference>
<dbReference type="GO" id="GO:0005935">
    <property type="term" value="C:cellular bud neck"/>
    <property type="evidence" value="ECO:0000314"/>
    <property type="project" value="SGD"/>
</dbReference>
<dbReference type="GO" id="GO:0000131">
    <property type="term" value="C:incipient cellular bud site"/>
    <property type="evidence" value="ECO:0000314"/>
    <property type="project" value="SGD"/>
</dbReference>
<dbReference type="GO" id="GO:0043332">
    <property type="term" value="C:mating projection tip"/>
    <property type="evidence" value="ECO:0007005"/>
    <property type="project" value="SGD"/>
</dbReference>
<dbReference type="GO" id="GO:0005634">
    <property type="term" value="C:nucleus"/>
    <property type="evidence" value="ECO:0007669"/>
    <property type="project" value="UniProtKB-SubCell"/>
</dbReference>
<dbReference type="GO" id="GO:0003677">
    <property type="term" value="F:DNA binding"/>
    <property type="evidence" value="ECO:0007669"/>
    <property type="project" value="UniProtKB-KW"/>
</dbReference>
<dbReference type="GO" id="GO:0071555">
    <property type="term" value="P:cell wall organization"/>
    <property type="evidence" value="ECO:0007669"/>
    <property type="project" value="UniProtKB-KW"/>
</dbReference>
<dbReference type="GO" id="GO:0070880">
    <property type="term" value="P:fungal-type cell wall beta-glucan biosynthetic process"/>
    <property type="evidence" value="ECO:0000318"/>
    <property type="project" value="GO_Central"/>
</dbReference>
<dbReference type="GO" id="GO:0032995">
    <property type="term" value="P:regulation of fungal-type cell wall biogenesis"/>
    <property type="evidence" value="ECO:0000315"/>
    <property type="project" value="SGD"/>
</dbReference>
<dbReference type="GO" id="GO:0007346">
    <property type="term" value="P:regulation of mitotic cell cycle"/>
    <property type="evidence" value="ECO:0000315"/>
    <property type="project" value="SGD"/>
</dbReference>
<dbReference type="DisProt" id="DP02159"/>
<dbReference type="Gene3D" id="3.40.1580.10">
    <property type="entry name" value="SMI1/KNR4-like"/>
    <property type="match status" value="1"/>
</dbReference>
<dbReference type="InterPro" id="IPR009203">
    <property type="entry name" value="Knr4/Smi1"/>
</dbReference>
<dbReference type="InterPro" id="IPR018958">
    <property type="entry name" value="Knr4/Smi1-like_dom"/>
</dbReference>
<dbReference type="InterPro" id="IPR037883">
    <property type="entry name" value="Knr4/Smi1-like_sf"/>
</dbReference>
<dbReference type="InterPro" id="IPR051873">
    <property type="entry name" value="KNR4/SMI1_regulator"/>
</dbReference>
<dbReference type="PANTHER" id="PTHR47432">
    <property type="entry name" value="CELL WALL ASSEMBLY REGULATOR SMI1"/>
    <property type="match status" value="1"/>
</dbReference>
<dbReference type="PANTHER" id="PTHR47432:SF1">
    <property type="entry name" value="CELL WALL ASSEMBLY REGULATOR SMI1"/>
    <property type="match status" value="1"/>
</dbReference>
<dbReference type="Pfam" id="PF09346">
    <property type="entry name" value="SMI1_KNR4"/>
    <property type="match status" value="1"/>
</dbReference>
<dbReference type="PIRSF" id="PIRSF017023">
    <property type="entry name" value="KNR4"/>
    <property type="match status" value="1"/>
</dbReference>
<dbReference type="SMART" id="SM00860">
    <property type="entry name" value="SMI1_KNR4"/>
    <property type="match status" value="1"/>
</dbReference>
<dbReference type="SUPFAM" id="SSF160631">
    <property type="entry name" value="SMI1/KNR4-like"/>
    <property type="match status" value="1"/>
</dbReference>
<comment type="function">
    <text evidence="2 5">Protein involved in the regulation of cell wall assembly and 1,3-beta-glucan synthesis, possibly through the transcriptional regulation of cell wall glucan and chitin synthesis.</text>
</comment>
<comment type="subunit">
    <text evidence="3">Interacts with TYS1.</text>
</comment>
<comment type="interaction">
    <interactant intactId="EBI-17452">
        <id>P32566</id>
    </interactant>
    <interactant intactId="EBI-18843">
        <id>P36421</id>
        <label>TYS1</label>
    </interactant>
    <organismsDiffer>false</organismsDiffer>
    <experiments>3</experiments>
</comment>
<comment type="subcellular location">
    <subcellularLocation>
        <location>Nucleus</location>
    </subcellularLocation>
</comment>
<comment type="miscellaneous">
    <text evidence="4">Present with 5680 molecules/cell in log phase SD medium.</text>
</comment>
<comment type="similarity">
    <text evidence="6">Belongs to the KNR4/SMI1 family.</text>
</comment>
<name>SMI1_YEAST</name>
<protein>
    <recommendedName>
        <fullName>Cell wall assembly regulator SMI1</fullName>
    </recommendedName>
    <alternativeName>
        <fullName>Killer toxin-resistance protein 4</fullName>
    </alternativeName>
</protein>
<feature type="chain" id="PRO_0000209870" description="Cell wall assembly regulator SMI1">
    <location>
        <begin position="1"/>
        <end position="505"/>
    </location>
</feature>
<feature type="region of interest" description="Disordered" evidence="1">
    <location>
        <begin position="343"/>
        <end position="505"/>
    </location>
</feature>
<feature type="compositionally biased region" description="Polar residues" evidence="1">
    <location>
        <begin position="343"/>
        <end position="358"/>
    </location>
</feature>
<feature type="compositionally biased region" description="Basic and acidic residues" evidence="1">
    <location>
        <begin position="396"/>
        <end position="408"/>
    </location>
</feature>
<feature type="compositionally biased region" description="Polar residues" evidence="1">
    <location>
        <begin position="411"/>
        <end position="421"/>
    </location>
</feature>
<feature type="compositionally biased region" description="Basic and acidic residues" evidence="1">
    <location>
        <begin position="424"/>
        <end position="495"/>
    </location>
</feature>
<feature type="modified residue" description="Phosphoserine" evidence="7">
    <location>
        <position position="202"/>
    </location>
</feature>
<feature type="modified residue" description="Phosphoserine" evidence="7 9">
    <location>
        <position position="203"/>
    </location>
</feature>
<feature type="modified residue" description="Phosphothreonine" evidence="9">
    <location>
        <position position="376"/>
    </location>
</feature>
<feature type="modified residue" description="Phosphoserine" evidence="7 9">
    <location>
        <position position="381"/>
    </location>
</feature>
<feature type="modified residue" description="Phosphoserine" evidence="7 8 9">
    <location>
        <position position="394"/>
    </location>
</feature>
<feature type="modified residue" description="Phosphoserine" evidence="7 8 9">
    <location>
        <position position="400"/>
    </location>
</feature>
<feature type="cross-link" description="Glycyl lysine isopeptide (Lys-Gly) (interchain with G-Cter in ubiquitin)" evidence="10">
    <location>
        <position position="453"/>
    </location>
</feature>
<feature type="helix" evidence="12">
    <location>
        <begin position="87"/>
        <end position="104"/>
    </location>
</feature>
<feature type="helix" evidence="12">
    <location>
        <begin position="106"/>
        <end position="111"/>
    </location>
</feature>
<feature type="helix" evidence="12">
    <location>
        <begin position="118"/>
        <end position="128"/>
    </location>
</feature>
<feature type="helix" evidence="12">
    <location>
        <begin position="134"/>
        <end position="140"/>
    </location>
</feature>
<feature type="strand" evidence="12">
    <location>
        <begin position="157"/>
        <end position="164"/>
    </location>
</feature>
<feature type="helix" evidence="12">
    <location>
        <begin position="167"/>
        <end position="186"/>
    </location>
</feature>
<feature type="strand" evidence="12">
    <location>
        <begin position="221"/>
        <end position="224"/>
    </location>
</feature>
<feature type="turn" evidence="11">
    <location>
        <begin position="225"/>
        <end position="227"/>
    </location>
</feature>
<feature type="strand" evidence="12">
    <location>
        <begin position="230"/>
        <end position="232"/>
    </location>
</feature>
<feature type="strand" evidence="12">
    <location>
        <begin position="237"/>
        <end position="242"/>
    </location>
</feature>
<feature type="strand" evidence="12">
    <location>
        <begin position="244"/>
        <end position="254"/>
    </location>
</feature>
<feature type="strand" evidence="12">
    <location>
        <begin position="263"/>
        <end position="268"/>
    </location>
</feature>
<feature type="strand" evidence="12">
    <location>
        <begin position="272"/>
        <end position="280"/>
    </location>
</feature>
<feature type="helix" evidence="12">
    <location>
        <begin position="281"/>
        <end position="293"/>
    </location>
</feature>
<feature type="strand" evidence="12">
    <location>
        <begin position="298"/>
        <end position="300"/>
    </location>
</feature>
<feature type="strand" evidence="12">
    <location>
        <begin position="312"/>
        <end position="316"/>
    </location>
</feature>
<feature type="turn" evidence="12">
    <location>
        <begin position="318"/>
        <end position="321"/>
    </location>
</feature>
<feature type="helix" evidence="12">
    <location>
        <begin position="327"/>
        <end position="340"/>
    </location>
</feature>
<accession>P32566</accession>
<accession>D6VV09</accession>
<evidence type="ECO:0000256" key="1">
    <source>
        <dbReference type="SAM" id="MobiDB-lite"/>
    </source>
</evidence>
<evidence type="ECO:0000269" key="2">
    <source>
    </source>
</evidence>
<evidence type="ECO:0000269" key="3">
    <source>
    </source>
</evidence>
<evidence type="ECO:0000269" key="4">
    <source>
    </source>
</evidence>
<evidence type="ECO:0000269" key="5">
    <source>
    </source>
</evidence>
<evidence type="ECO:0000305" key="6"/>
<evidence type="ECO:0007744" key="7">
    <source>
    </source>
</evidence>
<evidence type="ECO:0007744" key="8">
    <source>
    </source>
</evidence>
<evidence type="ECO:0007744" key="9">
    <source>
    </source>
</evidence>
<evidence type="ECO:0007744" key="10">
    <source>
    </source>
</evidence>
<evidence type="ECO:0007829" key="11">
    <source>
        <dbReference type="PDB" id="6QBN"/>
    </source>
</evidence>
<evidence type="ECO:0007829" key="12">
    <source>
        <dbReference type="PDB" id="6QBR"/>
    </source>
</evidence>
<proteinExistence type="evidence at protein level"/>
<reference key="1">
    <citation type="journal article" date="1993" name="Proc. Natl. Acad. Sci. U.S.A.">
        <title>Yeast calmodulin and a conserved nuclear protein participate in the in vivo binding of a matrix association region.</title>
        <authorList>
            <person name="Fishel B.R."/>
            <person name="Sperry A.O."/>
            <person name="Garrard W.T."/>
        </authorList>
    </citation>
    <scope>NUCLEOTIDE SEQUENCE [GENOMIC DNA]</scope>
    <source>
        <strain>ATCC 208353 / W303-1A</strain>
    </source>
</reference>
<reference key="2">
    <citation type="journal article" date="1994" name="Mol. Cell. Biol.">
        <title>Cloning and characterization of KNR4, a yeast gene involved in (1,3)-beta-glucan synthesis.</title>
        <authorList>
            <person name="Hong Z."/>
            <person name="Mann P."/>
            <person name="Brown N.H."/>
            <person name="Tran L.E."/>
            <person name="Shaw K.J."/>
            <person name="Didomenico B.J."/>
        </authorList>
    </citation>
    <scope>NUCLEOTIDE SEQUENCE [GENOMIC DNA]</scope>
    <scope>FUNCTION</scope>
</reference>
<reference key="3">
    <citation type="journal article" date="1996" name="Yeast">
        <title>Sequence analysis of the 43 kb CRM1-YLM9-PET54-DIE2-SMI1-PHO81-YHB4-PFK1 region from the right arm of Saccharomyces cerevisiae chromosome VII.</title>
        <authorList>
            <person name="van der Aart Q.J.M."/>
            <person name="Kleine K."/>
            <person name="Steensma H.Y."/>
        </authorList>
    </citation>
    <scope>NUCLEOTIDE SEQUENCE [GENOMIC DNA]</scope>
    <source>
        <strain>ATCC 204508 / S288c</strain>
    </source>
</reference>
<reference key="4">
    <citation type="journal article" date="1997" name="Nature">
        <title>The nucleotide sequence of Saccharomyces cerevisiae chromosome VII.</title>
        <authorList>
            <person name="Tettelin H."/>
            <person name="Agostoni-Carbone M.L."/>
            <person name="Albermann K."/>
            <person name="Albers M."/>
            <person name="Arroyo J."/>
            <person name="Backes U."/>
            <person name="Barreiros T."/>
            <person name="Bertani I."/>
            <person name="Bjourson A.J."/>
            <person name="Brueckner M."/>
            <person name="Bruschi C.V."/>
            <person name="Carignani G."/>
            <person name="Castagnoli L."/>
            <person name="Cerdan E."/>
            <person name="Clemente M.L."/>
            <person name="Coblenz A."/>
            <person name="Coglievina M."/>
            <person name="Coissac E."/>
            <person name="Defoor E."/>
            <person name="Del Bino S."/>
            <person name="Delius H."/>
            <person name="Delneri D."/>
            <person name="de Wergifosse P."/>
            <person name="Dujon B."/>
            <person name="Durand P."/>
            <person name="Entian K.-D."/>
            <person name="Eraso P."/>
            <person name="Escribano V."/>
            <person name="Fabiani L."/>
            <person name="Fartmann B."/>
            <person name="Feroli F."/>
            <person name="Feuermann M."/>
            <person name="Frontali L."/>
            <person name="Garcia-Gonzalez M."/>
            <person name="Garcia-Saez M.I."/>
            <person name="Goffeau A."/>
            <person name="Guerreiro P."/>
            <person name="Hani J."/>
            <person name="Hansen M."/>
            <person name="Hebling U."/>
            <person name="Hernandez K."/>
            <person name="Heumann K."/>
            <person name="Hilger F."/>
            <person name="Hofmann B."/>
            <person name="Indge K.J."/>
            <person name="James C.M."/>
            <person name="Klima R."/>
            <person name="Koetter P."/>
            <person name="Kramer B."/>
            <person name="Kramer W."/>
            <person name="Lauquin G."/>
            <person name="Leuther H."/>
            <person name="Louis E.J."/>
            <person name="Maillier E."/>
            <person name="Marconi A."/>
            <person name="Martegani E."/>
            <person name="Mazon M.J."/>
            <person name="Mazzoni C."/>
            <person name="McReynolds A.D.K."/>
            <person name="Melchioretto P."/>
            <person name="Mewes H.-W."/>
            <person name="Minenkova O."/>
            <person name="Mueller-Auer S."/>
            <person name="Nawrocki A."/>
            <person name="Netter P."/>
            <person name="Neu R."/>
            <person name="Nombela C."/>
            <person name="Oliver S.G."/>
            <person name="Panzeri L."/>
            <person name="Paoluzi S."/>
            <person name="Plevani P."/>
            <person name="Portetelle D."/>
            <person name="Portillo F."/>
            <person name="Potier S."/>
            <person name="Purnelle B."/>
            <person name="Rieger M."/>
            <person name="Riles L."/>
            <person name="Rinaldi T."/>
            <person name="Robben J."/>
            <person name="Rodrigues-Pousada C."/>
            <person name="Rodriguez-Belmonte E."/>
            <person name="Rodriguez-Torres A.M."/>
            <person name="Rose M."/>
            <person name="Ruzzi M."/>
            <person name="Saliola M."/>
            <person name="Sanchez-Perez M."/>
            <person name="Schaefer B."/>
            <person name="Schaefer M."/>
            <person name="Scharfe M."/>
            <person name="Schmidheini T."/>
            <person name="Schreer A."/>
            <person name="Skala J."/>
            <person name="Souciet J.-L."/>
            <person name="Steensma H.Y."/>
            <person name="Talla E."/>
            <person name="Thierry A."/>
            <person name="Vandenbol M."/>
            <person name="van der Aart Q.J.M."/>
            <person name="Van Dyck L."/>
            <person name="Vanoni M."/>
            <person name="Verhasselt P."/>
            <person name="Voet M."/>
            <person name="Volckaert G."/>
            <person name="Wambutt R."/>
            <person name="Watson M.D."/>
            <person name="Weber N."/>
            <person name="Wedler E."/>
            <person name="Wedler H."/>
            <person name="Wipfli P."/>
            <person name="Wolf K."/>
            <person name="Wright L.F."/>
            <person name="Zaccaria P."/>
            <person name="Zimmermann M."/>
            <person name="Zollner A."/>
            <person name="Kleine K."/>
        </authorList>
    </citation>
    <scope>NUCLEOTIDE SEQUENCE [LARGE SCALE GENOMIC DNA]</scope>
    <source>
        <strain>ATCC 204508 / S288c</strain>
    </source>
</reference>
<reference key="5">
    <citation type="journal article" date="2014" name="G3 (Bethesda)">
        <title>The reference genome sequence of Saccharomyces cerevisiae: Then and now.</title>
        <authorList>
            <person name="Engel S.R."/>
            <person name="Dietrich F.S."/>
            <person name="Fisk D.G."/>
            <person name="Binkley G."/>
            <person name="Balakrishnan R."/>
            <person name="Costanzo M.C."/>
            <person name="Dwight S.S."/>
            <person name="Hitz B.C."/>
            <person name="Karra K."/>
            <person name="Nash R.S."/>
            <person name="Weng S."/>
            <person name="Wong E.D."/>
            <person name="Lloyd P."/>
            <person name="Skrzypek M.S."/>
            <person name="Miyasato S.R."/>
            <person name="Simison M."/>
            <person name="Cherry J.M."/>
        </authorList>
    </citation>
    <scope>GENOME REANNOTATION</scope>
    <source>
        <strain>ATCC 204508 / S288c</strain>
    </source>
</reference>
<reference key="6">
    <citation type="journal article" date="2007" name="Genome Res.">
        <title>Approaching a complete repository of sequence-verified protein-encoding clones for Saccharomyces cerevisiae.</title>
        <authorList>
            <person name="Hu Y."/>
            <person name="Rolfs A."/>
            <person name="Bhullar B."/>
            <person name="Murthy T.V.S."/>
            <person name="Zhu C."/>
            <person name="Berger M.F."/>
            <person name="Camargo A.A."/>
            <person name="Kelley F."/>
            <person name="McCarron S."/>
            <person name="Jepson D."/>
            <person name="Richardson A."/>
            <person name="Raphael J."/>
            <person name="Moreira D."/>
            <person name="Taycher E."/>
            <person name="Zuo D."/>
            <person name="Mohr S."/>
            <person name="Kane M.F."/>
            <person name="Williamson J."/>
            <person name="Simpson A.J.G."/>
            <person name="Bulyk M.L."/>
            <person name="Harlow E."/>
            <person name="Marsischky G."/>
            <person name="Kolodner R.D."/>
            <person name="LaBaer J."/>
        </authorList>
    </citation>
    <scope>NUCLEOTIDE SEQUENCE [GENOMIC DNA]</scope>
    <source>
        <strain>ATCC 204508 / S288c</strain>
    </source>
</reference>
<reference key="7">
    <citation type="journal article" date="1999" name="Microbiology">
        <title>KNR4, a suppressor of Saccharomyces cerevisiae cwh mutants, is involved in the transcriptional control of chitin synthase genes.</title>
        <authorList>
            <person name="Martin H."/>
            <person name="Dagkessamanskaia A."/>
            <person name="Satchanska G."/>
            <person name="Dallies N."/>
            <person name="Francois J."/>
        </authorList>
    </citation>
    <scope>FUNCTION</scope>
</reference>
<reference key="8">
    <citation type="journal article" date="2001" name="FEMS Microbiol. Lett.">
        <title>Interaction of Knr4 protein, a protein involved in cell wall synthesis, with tyrosine tRNA synthetase encoded by TYS1 in Saccharomyces cerevisiae.</title>
        <authorList>
            <person name="Dagkessamanskaia A."/>
            <person name="Martin-Yken H."/>
            <person name="Basmaji F."/>
            <person name="Briza P."/>
            <person name="Francois J."/>
        </authorList>
    </citation>
    <scope>INTERACTION WITH TYS1</scope>
</reference>
<reference key="9">
    <citation type="journal article" date="2003" name="Nature">
        <title>Global analysis of protein expression in yeast.</title>
        <authorList>
            <person name="Ghaemmaghami S."/>
            <person name="Huh W.-K."/>
            <person name="Bower K."/>
            <person name="Howson R.W."/>
            <person name="Belle A."/>
            <person name="Dephoure N."/>
            <person name="O'Shea E.K."/>
            <person name="Weissman J.S."/>
        </authorList>
    </citation>
    <scope>LEVEL OF PROTEIN EXPRESSION [LARGE SCALE ANALYSIS]</scope>
</reference>
<reference key="10">
    <citation type="journal article" date="2007" name="J. Proteome Res.">
        <title>Large-scale phosphorylation analysis of alpha-factor-arrested Saccharomyces cerevisiae.</title>
        <authorList>
            <person name="Li X."/>
            <person name="Gerber S.A."/>
            <person name="Rudner A.D."/>
            <person name="Beausoleil S.A."/>
            <person name="Haas W."/>
            <person name="Villen J."/>
            <person name="Elias J.E."/>
            <person name="Gygi S.P."/>
        </authorList>
    </citation>
    <scope>PHOSPHORYLATION [LARGE SCALE ANALYSIS] AT SER-202; SER-203; SER-381; SER-394 AND SER-400</scope>
    <scope>IDENTIFICATION BY MASS SPECTROMETRY [LARGE SCALE ANALYSIS]</scope>
    <source>
        <strain>ADR376</strain>
    </source>
</reference>
<reference key="11">
    <citation type="journal article" date="2007" name="Proc. Natl. Acad. Sci. U.S.A.">
        <title>Analysis of phosphorylation sites on proteins from Saccharomyces cerevisiae by electron transfer dissociation (ETD) mass spectrometry.</title>
        <authorList>
            <person name="Chi A."/>
            <person name="Huttenhower C."/>
            <person name="Geer L.Y."/>
            <person name="Coon J.J."/>
            <person name="Syka J.E.P."/>
            <person name="Bai D.L."/>
            <person name="Shabanowitz J."/>
            <person name="Burke D.J."/>
            <person name="Troyanskaya O.G."/>
            <person name="Hunt D.F."/>
        </authorList>
    </citation>
    <scope>IDENTIFICATION BY MASS SPECTROMETRY [LARGE SCALE ANALYSIS]</scope>
</reference>
<reference key="12">
    <citation type="journal article" date="2008" name="Mol. Cell. Proteomics">
        <title>A multidimensional chromatography technology for in-depth phosphoproteome analysis.</title>
        <authorList>
            <person name="Albuquerque C.P."/>
            <person name="Smolka M.B."/>
            <person name="Payne S.H."/>
            <person name="Bafna V."/>
            <person name="Eng J."/>
            <person name="Zhou H."/>
        </authorList>
    </citation>
    <scope>PHOSPHORYLATION [LARGE SCALE ANALYSIS] AT SER-394 AND SER-400</scope>
    <scope>IDENTIFICATION BY MASS SPECTROMETRY [LARGE SCALE ANALYSIS]</scope>
</reference>
<reference key="13">
    <citation type="journal article" date="2009" name="Science">
        <title>Global analysis of Cdk1 substrate phosphorylation sites provides insights into evolution.</title>
        <authorList>
            <person name="Holt L.J."/>
            <person name="Tuch B.B."/>
            <person name="Villen J."/>
            <person name="Johnson A.D."/>
            <person name="Gygi S.P."/>
            <person name="Morgan D.O."/>
        </authorList>
    </citation>
    <scope>PHOSPHORYLATION [LARGE SCALE ANALYSIS] AT SER-203; THR-376; SER-381; SER-394 AND SER-400</scope>
    <scope>IDENTIFICATION BY MASS SPECTROMETRY [LARGE SCALE ANALYSIS]</scope>
</reference>
<reference key="14">
    <citation type="journal article" date="2012" name="Proteomics">
        <title>Sites of ubiquitin attachment in Saccharomyces cerevisiae.</title>
        <authorList>
            <person name="Starita L.M."/>
            <person name="Lo R.S."/>
            <person name="Eng J.K."/>
            <person name="von Haller P.D."/>
            <person name="Fields S."/>
        </authorList>
    </citation>
    <scope>UBIQUITINATION [LARGE SCALE ANALYSIS] AT LYS-453</scope>
    <scope>IDENTIFICATION BY MASS SPECTROMETRY [LARGE SCALE ANALYSIS]</scope>
</reference>
<keyword id="KW-0002">3D-structure</keyword>
<keyword id="KW-0961">Cell wall biogenesis/degradation</keyword>
<keyword id="KW-0238">DNA-binding</keyword>
<keyword id="KW-1017">Isopeptide bond</keyword>
<keyword id="KW-0539">Nucleus</keyword>
<keyword id="KW-0597">Phosphoprotein</keyword>
<keyword id="KW-1185">Reference proteome</keyword>
<keyword id="KW-0804">Transcription</keyword>
<keyword id="KW-0805">Transcription regulation</keyword>
<keyword id="KW-0832">Ubl conjugation</keyword>
<sequence>MDLFKRKVKEWVYSLSTDDHYAEYNPDETPTFNMGKRLNSNNGQVNPSQMHLNSVDEEMSMGFQNGVPSNEDINIDEFTSTESNDGVSETLLAWRHIDFWTSEHNPDLNATLSDPCTQNDITHAEEDLEVSFPNPVKASFKIHDGQEDLESMTGTSGLFYGFQLMTLDQVVAMTQAWRNVAKNLNKRSQQGLSHVTSTGSSSSMERLNGNKFKLPNIPDQKSIPPNAVQPVYAHPAWIPLITDNAGNHIGVDLAPGPNGKYAQIITFGRDFDTKFVIAENWGEFLLSFANDLEAGNWYLVDDNDDYFSGDGELVFRDKKSNGPIQDYFEVLKRRTWIKYQENLRSQQQKSQPDTSLQEQKYVPASQKKVAAEQPSTLNAESIKGEDSGSADVQSVQDHESVKIVKTEPSEAETTTVNTESLGQAEHEIKADNVDIKQESERKEDEKQPKVEEKEHVENEHVTESAKKDDDVNKQTEEMNKKEENEIRSDDAKVEEAREEFENIAL</sequence>
<gene>
    <name type="primary">SMI1</name>
    <name type="synonym">KNR4</name>
    <name type="synonym">KTR4</name>
    <name type="ordered locus">YGR229C</name>
    <name type="ORF">G8553</name>
</gene>